<proteinExistence type="inferred from homology"/>
<feature type="signal peptide" evidence="2">
    <location>
        <begin position="1"/>
        <end position="27"/>
    </location>
</feature>
<feature type="chain" id="PRO_0000434105" description="Hyphal wall protein 1">
    <location>
        <begin position="28"/>
        <end position="612"/>
    </location>
</feature>
<feature type="propeptide" id="PRO_0000434106" description="Removed in mature form" evidence="1">
    <location>
        <begin position="613"/>
        <end position="633"/>
    </location>
</feature>
<feature type="repeat" description="1; approximate" evidence="5">
    <location>
        <begin position="46"/>
        <end position="58"/>
    </location>
</feature>
<feature type="repeat" description="2; approximate" evidence="5">
    <location>
        <begin position="59"/>
        <end position="69"/>
    </location>
</feature>
<feature type="repeat" description="3; approximate" evidence="5">
    <location>
        <begin position="70"/>
        <end position="81"/>
    </location>
</feature>
<feature type="repeat" description="4" evidence="5">
    <location>
        <begin position="82"/>
        <end position="91"/>
    </location>
</feature>
<feature type="repeat" description="5" evidence="5">
    <location>
        <begin position="92"/>
        <end position="101"/>
    </location>
</feature>
<feature type="repeat" description="6" evidence="5">
    <location>
        <begin position="102"/>
        <end position="111"/>
    </location>
</feature>
<feature type="repeat" description="7" evidence="5">
    <location>
        <begin position="112"/>
        <end position="121"/>
    </location>
</feature>
<feature type="repeat" description="8" evidence="5">
    <location>
        <begin position="122"/>
        <end position="131"/>
    </location>
</feature>
<feature type="repeat" description="9" evidence="5">
    <location>
        <begin position="132"/>
        <end position="141"/>
    </location>
</feature>
<feature type="repeat" description="10" evidence="5">
    <location>
        <begin position="142"/>
        <end position="151"/>
    </location>
</feature>
<feature type="repeat" description="11" evidence="5">
    <location>
        <begin position="152"/>
        <end position="161"/>
    </location>
</feature>
<feature type="repeat" description="12" evidence="5">
    <location>
        <begin position="162"/>
        <end position="171"/>
    </location>
</feature>
<feature type="repeat" description="13; truncated" evidence="5">
    <location>
        <begin position="172"/>
        <end position="179"/>
    </location>
</feature>
<feature type="repeat" description="14; truncated" evidence="5">
    <location>
        <begin position="180"/>
        <end position="187"/>
    </location>
</feature>
<feature type="region of interest" description="Disordered" evidence="4">
    <location>
        <begin position="40"/>
        <end position="306"/>
    </location>
</feature>
<feature type="region of interest" description="14 X 10 AA tandem repeats of [EVIQ]-P-[CDT]-D-[YNW]-P-[PQ]-[QI]-[QP]-[QDN]" evidence="5">
    <location>
        <begin position="46"/>
        <end position="187"/>
    </location>
</feature>
<feature type="region of interest" description="Disordered" evidence="4">
    <location>
        <begin position="411"/>
        <end position="569"/>
    </location>
</feature>
<feature type="compositionally biased region" description="Low complexity" evidence="4">
    <location>
        <begin position="42"/>
        <end position="114"/>
    </location>
</feature>
<feature type="compositionally biased region" description="Pro residues" evidence="4">
    <location>
        <begin position="115"/>
        <end position="171"/>
    </location>
</feature>
<feature type="compositionally biased region" description="Low complexity" evidence="4">
    <location>
        <begin position="172"/>
        <end position="183"/>
    </location>
</feature>
<feature type="compositionally biased region" description="Low complexity" evidence="4">
    <location>
        <begin position="193"/>
        <end position="306"/>
    </location>
</feature>
<feature type="compositionally biased region" description="Polar residues" evidence="4">
    <location>
        <begin position="414"/>
        <end position="425"/>
    </location>
</feature>
<feature type="compositionally biased region" description="Low complexity" evidence="4">
    <location>
        <begin position="507"/>
        <end position="549"/>
    </location>
</feature>
<feature type="lipid moiety-binding region" description="GPI-anchor amidated glycine" evidence="1">
    <location>
        <position position="612"/>
    </location>
</feature>
<feature type="glycosylation site" description="N-linked (GlcNAc...) asparagine" evidence="3">
    <location>
        <position position="240"/>
    </location>
</feature>
<feature type="glycosylation site" description="N-linked (GlcNAc...) asparagine" evidence="3">
    <location>
        <position position="285"/>
    </location>
</feature>
<feature type="glycosylation site" description="N-linked (GlcNAc...) asparagine" evidence="3">
    <location>
        <position position="600"/>
    </location>
</feature>
<evidence type="ECO:0000250" key="1">
    <source>
        <dbReference type="UniProtKB" id="P46593"/>
    </source>
</evidence>
<evidence type="ECO:0000255" key="2"/>
<evidence type="ECO:0000255" key="3">
    <source>
        <dbReference type="PROSITE-ProRule" id="PRU00498"/>
    </source>
</evidence>
<evidence type="ECO:0000256" key="4">
    <source>
        <dbReference type="SAM" id="MobiDB-lite"/>
    </source>
</evidence>
<evidence type="ECO:0000305" key="5"/>
<name>HWP1_CANAW</name>
<dbReference type="EMBL" id="CH672349">
    <property type="protein sequence ID" value="EEQ45138.1"/>
    <property type="molecule type" value="Genomic_DNA"/>
</dbReference>
<dbReference type="GlyCosmos" id="C4YHA6">
    <property type="glycosylation" value="3 sites, No reported glycans"/>
</dbReference>
<dbReference type="PaxDb" id="5476-C4YHA6"/>
<dbReference type="VEuPathDB" id="FungiDB:CAWG_03451"/>
<dbReference type="HOGENOM" id="CLU_033728_0_0_1"/>
<dbReference type="OMA" id="EPCDYPQ"/>
<dbReference type="OrthoDB" id="28389at766764"/>
<dbReference type="Proteomes" id="UP000001429">
    <property type="component" value="Chromosome 4, Supercontig 1.4"/>
</dbReference>
<dbReference type="GO" id="GO:0005576">
    <property type="term" value="C:extracellular region"/>
    <property type="evidence" value="ECO:0007669"/>
    <property type="project" value="UniProtKB-KW"/>
</dbReference>
<dbReference type="GO" id="GO:0009277">
    <property type="term" value="C:fungal-type cell wall"/>
    <property type="evidence" value="ECO:0007669"/>
    <property type="project" value="UniProtKB-ARBA"/>
</dbReference>
<dbReference type="GO" id="GO:0098552">
    <property type="term" value="C:side of membrane"/>
    <property type="evidence" value="ECO:0007669"/>
    <property type="project" value="UniProtKB-KW"/>
</dbReference>
<dbReference type="GO" id="GO:0007155">
    <property type="term" value="P:cell adhesion"/>
    <property type="evidence" value="ECO:0007669"/>
    <property type="project" value="UniProtKB-KW"/>
</dbReference>
<dbReference type="InterPro" id="IPR025928">
    <property type="entry name" value="Flocculin_t3_rpt"/>
</dbReference>
<dbReference type="Pfam" id="PF13928">
    <property type="entry name" value="Flocculin_t3"/>
    <property type="match status" value="2"/>
</dbReference>
<comment type="function">
    <text evidence="1">Major hyphal cell wall protein which plays a role of adhesin and is required for mating, normal hyphal development, cell-to-cell adhesive functions necessary for biofilm integrity, attachment to host, and virulence. Promotes interactions with host and bacterial molecules, thus leading to effective colonization within polymicrobial communities. Plays a crucial role in gastrointestinal colonization, in mucosal symptomatic and asymptomatic infections, in vaginitis, as well as in lethal oroesophageal candidiasis, caused by the combined action of fungal virulence factors and host inflammatory responses when protective immunity is absent.</text>
</comment>
<comment type="subcellular location">
    <subcellularLocation>
        <location evidence="1">Secreted</location>
        <location evidence="1">Cell wall</location>
    </subcellularLocation>
    <subcellularLocation>
        <location>Membrane</location>
        <topology evidence="1">Lipid-anchor</topology>
        <topology evidence="1">GPI-anchor</topology>
    </subcellularLocation>
</comment>
<comment type="developmental stage">
    <text evidence="1">Found in hyphal but not yeast forms.</text>
</comment>
<comment type="PTM">
    <text evidence="1">The GPI-anchor is attached to the protein in the endoplasmic reticulum and serves to target the protein to the cell surface. There, the glucosamine-inositol phospholipid moiety is cleaved off and the GPI-modified mannoprotein is covalently attached via its lipidless GPI glycan remnant to the 1,6-beta-glucan of the outer cell wall layer.</text>
</comment>
<comment type="PTM">
    <text evidence="1">N- and O-glycosylated.</text>
</comment>
<comment type="miscellaneous">
    <text evidence="1">As a major cell surface protein expressed during infection, HWP1 detection can be used for diagnosis of invasive candidiasis. HWP1 epitopes can also be used to develop vaccines for protection against candidiasis.</text>
</comment>
<comment type="similarity">
    <text evidence="5">Belongs to the HWP1 family.</text>
</comment>
<keyword id="KW-0130">Cell adhesion</keyword>
<keyword id="KW-0134">Cell wall</keyword>
<keyword id="KW-0325">Glycoprotein</keyword>
<keyword id="KW-0336">GPI-anchor</keyword>
<keyword id="KW-0449">Lipoprotein</keyword>
<keyword id="KW-0472">Membrane</keyword>
<keyword id="KW-0677">Repeat</keyword>
<keyword id="KW-0964">Secreted</keyword>
<keyword id="KW-0732">Signal</keyword>
<protein>
    <recommendedName>
        <fullName evidence="1">Hyphal wall protein 1</fullName>
    </recommendedName>
</protein>
<accession>C4YHA6</accession>
<reference key="1">
    <citation type="journal article" date="2009" name="Nature">
        <title>Evolution of pathogenicity and sexual reproduction in eight Candida genomes.</title>
        <authorList>
            <person name="Butler G."/>
            <person name="Rasmussen M.D."/>
            <person name="Lin M.F."/>
            <person name="Santos M.A.S."/>
            <person name="Sakthikumar S."/>
            <person name="Munro C.A."/>
            <person name="Rheinbay E."/>
            <person name="Grabherr M."/>
            <person name="Forche A."/>
            <person name="Reedy J.L."/>
            <person name="Agrafioti I."/>
            <person name="Arnaud M.B."/>
            <person name="Bates S."/>
            <person name="Brown A.J.P."/>
            <person name="Brunke S."/>
            <person name="Costanzo M.C."/>
            <person name="Fitzpatrick D.A."/>
            <person name="de Groot P.W.J."/>
            <person name="Harris D."/>
            <person name="Hoyer L.L."/>
            <person name="Hube B."/>
            <person name="Klis F.M."/>
            <person name="Kodira C."/>
            <person name="Lennard N."/>
            <person name="Logue M.E."/>
            <person name="Martin R."/>
            <person name="Neiman A.M."/>
            <person name="Nikolaou E."/>
            <person name="Quail M.A."/>
            <person name="Quinn J."/>
            <person name="Santos M.C."/>
            <person name="Schmitzberger F.F."/>
            <person name="Sherlock G."/>
            <person name="Shah P."/>
            <person name="Silverstein K.A.T."/>
            <person name="Skrzypek M.S."/>
            <person name="Soll D."/>
            <person name="Staggs R."/>
            <person name="Stansfield I."/>
            <person name="Stumpf M.P.H."/>
            <person name="Sudbery P.E."/>
            <person name="Srikantha T."/>
            <person name="Zeng Q."/>
            <person name="Berman J."/>
            <person name="Berriman M."/>
            <person name="Heitman J."/>
            <person name="Gow N.A.R."/>
            <person name="Lorenz M.C."/>
            <person name="Birren B.W."/>
            <person name="Kellis M."/>
            <person name="Cuomo C.A."/>
        </authorList>
    </citation>
    <scope>NUCLEOTIDE SEQUENCE [LARGE SCALE GENOMIC DNA]</scope>
    <source>
        <strain>WO-1</strain>
    </source>
</reference>
<sequence length="633" mass="65327">MRLSTAQLIAIAYYMLSIGATVPQVDGQGETEEALIQKRSYDYYQEPCDDYPQQQQQQEPCDYPQQQQQEEPCDYPQQQPQEPCDYPQQPQEPCDYPQQPQEPCDYPQQPQEPCDNPPQPDVPCDNPPQPDVPCDNPPQPDIPCDNPPQPDIPCDNPPQPDQPDDNPPIPNIPTDWIPNIPTDWIPDIPEKPTTPATTPNIPATTTTSESSSSSSSSSSTTPKTSASTTPESSVPATTPNTSVPTTSSESTTPATSPESSVPVTSGSSILTTTSESSSAPATTPNTSVPTTTTEAKSSSTPLTTTTEHDTTVVTVTSCSNSVCTESEVTTGVIVITSKDTIYTTYCPLTETTPVSTAPATETPTGTVSTSTEQSTTVITVTSCSESSCTESEVTTGVVVVTSEETVYTTFCPLTENTPGTDSTPEASIPPMETIPAGSEPSMPAGETSPAVPKPEVPATESAPVPEMTPAGSQPSMPAGETSPAVPKSDVSATESAPAPEMTPAGTETKPAAPKSSAPATEPSPVAPGTESAPAGPGASSSPKSSVLASETSPIAPGAETAPAGSSGAITIPESSAVVSTTEGAIPTTLESVPLMQPSANYSSVAPISTFEGAGNNMRLTFGAAIIGIAAFLI</sequence>
<gene>
    <name evidence="1" type="primary">HWP1</name>
    <name type="ORF">CAWG_03451</name>
</gene>
<organism>
    <name type="scientific">Candida albicans (strain WO-1)</name>
    <name type="common">Yeast</name>
    <dbReference type="NCBI Taxonomy" id="294748"/>
    <lineage>
        <taxon>Eukaryota</taxon>
        <taxon>Fungi</taxon>
        <taxon>Dikarya</taxon>
        <taxon>Ascomycota</taxon>
        <taxon>Saccharomycotina</taxon>
        <taxon>Pichiomycetes</taxon>
        <taxon>Debaryomycetaceae</taxon>
        <taxon>Candida/Lodderomyces clade</taxon>
        <taxon>Candida</taxon>
    </lineage>
</organism>